<reference key="1">
    <citation type="submission" date="2006-03" db="EMBL/GenBank/DDBJ databases">
        <title>Complete sequence of Rhodopseudomonas palustris BisB5.</title>
        <authorList>
            <consortium name="US DOE Joint Genome Institute"/>
            <person name="Copeland A."/>
            <person name="Lucas S."/>
            <person name="Lapidus A."/>
            <person name="Barry K."/>
            <person name="Detter J.C."/>
            <person name="Glavina del Rio T."/>
            <person name="Hammon N."/>
            <person name="Israni S."/>
            <person name="Dalin E."/>
            <person name="Tice H."/>
            <person name="Pitluck S."/>
            <person name="Chain P."/>
            <person name="Malfatti S."/>
            <person name="Shin M."/>
            <person name="Vergez L."/>
            <person name="Schmutz J."/>
            <person name="Larimer F."/>
            <person name="Land M."/>
            <person name="Hauser L."/>
            <person name="Pelletier D.A."/>
            <person name="Kyrpides N."/>
            <person name="Lykidis A."/>
            <person name="Oda Y."/>
            <person name="Harwood C.S."/>
            <person name="Richardson P."/>
        </authorList>
    </citation>
    <scope>NUCLEOTIDE SEQUENCE [LARGE SCALE GENOMIC DNA]</scope>
    <source>
        <strain>BisB5</strain>
    </source>
</reference>
<keyword id="KW-0028">Amino-acid biosynthesis</keyword>
<keyword id="KW-0100">Branched-chain amino acid biosynthesis</keyword>
<keyword id="KW-0963">Cytoplasm</keyword>
<keyword id="KW-0432">Leucine biosynthesis</keyword>
<keyword id="KW-0464">Manganese</keyword>
<keyword id="KW-0479">Metal-binding</keyword>
<keyword id="KW-0808">Transferase</keyword>
<organism>
    <name type="scientific">Rhodopseudomonas palustris (strain BisB5)</name>
    <dbReference type="NCBI Taxonomy" id="316057"/>
    <lineage>
        <taxon>Bacteria</taxon>
        <taxon>Pseudomonadati</taxon>
        <taxon>Pseudomonadota</taxon>
        <taxon>Alphaproteobacteria</taxon>
        <taxon>Hyphomicrobiales</taxon>
        <taxon>Nitrobacteraceae</taxon>
        <taxon>Rhodopseudomonas</taxon>
    </lineage>
</organism>
<gene>
    <name evidence="1" type="primary">leuA</name>
    <name type="ordered locus">RPD_2112</name>
</gene>
<sequence length="524" mass="57526">MTTTPKSEQDRVIIFDTTLRDGEQCPGATMTFEEKLNVAAMLDEMGVDVIEAGYPFASDGDFEAVHEIAKRSKNSVICGLSRAAHKDIDRCAEAIKPAERGRIHTFLSTSPVHMKYKLQMEAAQVYEMVISSVTRARNHTDDVEWSAEDATRTEFDFLCRCIEAAIKAGATTINLPDTVGYAVPEEYREMFRKVRETVPNADKARFSVHCHDDLGMAVANSIAGVQGGARQIECTINGIGERAGNAALEEVVMAMRVRQDKVPYWNRIESKMLTHASKTVSAATSFPVQYNKAIVGRNAFAHESGIHQDGMIKNAQTYEIMTPETVGVKGTSLVMGKHSGRAGLIHKMEELGYKLSRNQIEDVFVRFKALADRKKDVYDEDIEALVDEQLLHGQDLIRLKSLTVIAGTHGPQRATMKIDVDGQLRIEEAEGNGPVDAVFNCIKALVPHDAKLELYQVHAVTEGTDAQAEVSVRLSHEGRSMTARAADPDTLVASAKAYLGALNKIVAKRQRDVRQDAPAVAVAG</sequence>
<evidence type="ECO:0000255" key="1">
    <source>
        <dbReference type="HAMAP-Rule" id="MF_01025"/>
    </source>
</evidence>
<dbReference type="EC" id="2.3.3.13" evidence="1"/>
<dbReference type="EMBL" id="CP000283">
    <property type="protein sequence ID" value="ABE39347.1"/>
    <property type="molecule type" value="Genomic_DNA"/>
</dbReference>
<dbReference type="SMR" id="Q138Z2"/>
<dbReference type="STRING" id="316057.RPD_2112"/>
<dbReference type="KEGG" id="rpd:RPD_2112"/>
<dbReference type="eggNOG" id="COG0119">
    <property type="taxonomic scope" value="Bacteria"/>
</dbReference>
<dbReference type="HOGENOM" id="CLU_022158_0_1_5"/>
<dbReference type="BioCyc" id="RPAL316057:RPD_RS10605-MONOMER"/>
<dbReference type="UniPathway" id="UPA00048">
    <property type="reaction ID" value="UER00070"/>
</dbReference>
<dbReference type="Proteomes" id="UP000001818">
    <property type="component" value="Chromosome"/>
</dbReference>
<dbReference type="GO" id="GO:0005829">
    <property type="term" value="C:cytosol"/>
    <property type="evidence" value="ECO:0007669"/>
    <property type="project" value="TreeGrafter"/>
</dbReference>
<dbReference type="GO" id="GO:0003852">
    <property type="term" value="F:2-isopropylmalate synthase activity"/>
    <property type="evidence" value="ECO:0007669"/>
    <property type="project" value="UniProtKB-UniRule"/>
</dbReference>
<dbReference type="GO" id="GO:0003985">
    <property type="term" value="F:acetyl-CoA C-acetyltransferase activity"/>
    <property type="evidence" value="ECO:0007669"/>
    <property type="project" value="UniProtKB-UniRule"/>
</dbReference>
<dbReference type="GO" id="GO:0030145">
    <property type="term" value="F:manganese ion binding"/>
    <property type="evidence" value="ECO:0007669"/>
    <property type="project" value="UniProtKB-UniRule"/>
</dbReference>
<dbReference type="GO" id="GO:0009098">
    <property type="term" value="P:L-leucine biosynthetic process"/>
    <property type="evidence" value="ECO:0007669"/>
    <property type="project" value="UniProtKB-UniRule"/>
</dbReference>
<dbReference type="CDD" id="cd07940">
    <property type="entry name" value="DRE_TIM_IPMS"/>
    <property type="match status" value="1"/>
</dbReference>
<dbReference type="FunFam" id="1.10.238.260:FF:000001">
    <property type="entry name" value="2-isopropylmalate synthase"/>
    <property type="match status" value="1"/>
</dbReference>
<dbReference type="FunFam" id="3.20.20.70:FF:000010">
    <property type="entry name" value="2-isopropylmalate synthase"/>
    <property type="match status" value="1"/>
</dbReference>
<dbReference type="FunFam" id="3.30.160.270:FF:000003">
    <property type="entry name" value="2-isopropylmalate synthase"/>
    <property type="match status" value="1"/>
</dbReference>
<dbReference type="Gene3D" id="1.10.238.260">
    <property type="match status" value="1"/>
</dbReference>
<dbReference type="Gene3D" id="3.30.160.270">
    <property type="match status" value="1"/>
</dbReference>
<dbReference type="Gene3D" id="3.20.20.70">
    <property type="entry name" value="Aldolase class I"/>
    <property type="match status" value="1"/>
</dbReference>
<dbReference type="HAMAP" id="MF_01025">
    <property type="entry name" value="LeuA_type1"/>
    <property type="match status" value="1"/>
</dbReference>
<dbReference type="InterPro" id="IPR050073">
    <property type="entry name" value="2-IPM_HCS-like"/>
</dbReference>
<dbReference type="InterPro" id="IPR013709">
    <property type="entry name" value="2-isopropylmalate_synth_dimer"/>
</dbReference>
<dbReference type="InterPro" id="IPR002034">
    <property type="entry name" value="AIPM/Hcit_synth_CS"/>
</dbReference>
<dbReference type="InterPro" id="IPR013785">
    <property type="entry name" value="Aldolase_TIM"/>
</dbReference>
<dbReference type="InterPro" id="IPR054691">
    <property type="entry name" value="LeuA/HCS_post-cat"/>
</dbReference>
<dbReference type="InterPro" id="IPR036230">
    <property type="entry name" value="LeuA_allosteric_dom_sf"/>
</dbReference>
<dbReference type="InterPro" id="IPR005671">
    <property type="entry name" value="LeuA_bact_synth"/>
</dbReference>
<dbReference type="InterPro" id="IPR000891">
    <property type="entry name" value="PYR_CT"/>
</dbReference>
<dbReference type="NCBIfam" id="TIGR00973">
    <property type="entry name" value="leuA_bact"/>
    <property type="match status" value="1"/>
</dbReference>
<dbReference type="NCBIfam" id="NF002086">
    <property type="entry name" value="PRK00915.1-3"/>
    <property type="match status" value="1"/>
</dbReference>
<dbReference type="NCBIfam" id="NF002087">
    <property type="entry name" value="PRK00915.1-4"/>
    <property type="match status" value="1"/>
</dbReference>
<dbReference type="PANTHER" id="PTHR10277:SF9">
    <property type="entry name" value="2-ISOPROPYLMALATE SYNTHASE 1, CHLOROPLASTIC-RELATED"/>
    <property type="match status" value="1"/>
</dbReference>
<dbReference type="PANTHER" id="PTHR10277">
    <property type="entry name" value="HOMOCITRATE SYNTHASE-RELATED"/>
    <property type="match status" value="1"/>
</dbReference>
<dbReference type="Pfam" id="PF22617">
    <property type="entry name" value="HCS_D2"/>
    <property type="match status" value="1"/>
</dbReference>
<dbReference type="Pfam" id="PF00682">
    <property type="entry name" value="HMGL-like"/>
    <property type="match status" value="1"/>
</dbReference>
<dbReference type="Pfam" id="PF08502">
    <property type="entry name" value="LeuA_dimer"/>
    <property type="match status" value="1"/>
</dbReference>
<dbReference type="SMART" id="SM00917">
    <property type="entry name" value="LeuA_dimer"/>
    <property type="match status" value="1"/>
</dbReference>
<dbReference type="SUPFAM" id="SSF110921">
    <property type="entry name" value="2-isopropylmalate synthase LeuA, allosteric (dimerisation) domain"/>
    <property type="match status" value="1"/>
</dbReference>
<dbReference type="SUPFAM" id="SSF51569">
    <property type="entry name" value="Aldolase"/>
    <property type="match status" value="1"/>
</dbReference>
<dbReference type="PROSITE" id="PS00815">
    <property type="entry name" value="AIPM_HOMOCIT_SYNTH_1"/>
    <property type="match status" value="1"/>
</dbReference>
<dbReference type="PROSITE" id="PS00816">
    <property type="entry name" value="AIPM_HOMOCIT_SYNTH_2"/>
    <property type="match status" value="1"/>
</dbReference>
<dbReference type="PROSITE" id="PS50991">
    <property type="entry name" value="PYR_CT"/>
    <property type="match status" value="1"/>
</dbReference>
<accession>Q138Z2</accession>
<feature type="chain" id="PRO_1000149260" description="2-isopropylmalate synthase">
    <location>
        <begin position="1"/>
        <end position="524"/>
    </location>
</feature>
<feature type="domain" description="Pyruvate carboxyltransferase" evidence="1">
    <location>
        <begin position="12"/>
        <end position="274"/>
    </location>
</feature>
<feature type="region of interest" description="Regulatory domain" evidence="1">
    <location>
        <begin position="398"/>
        <end position="524"/>
    </location>
</feature>
<feature type="binding site" evidence="1">
    <location>
        <position position="21"/>
    </location>
    <ligand>
        <name>Mn(2+)</name>
        <dbReference type="ChEBI" id="CHEBI:29035"/>
    </ligand>
</feature>
<feature type="binding site" evidence="1">
    <location>
        <position position="209"/>
    </location>
    <ligand>
        <name>Mn(2+)</name>
        <dbReference type="ChEBI" id="CHEBI:29035"/>
    </ligand>
</feature>
<feature type="binding site" evidence="1">
    <location>
        <position position="211"/>
    </location>
    <ligand>
        <name>Mn(2+)</name>
        <dbReference type="ChEBI" id="CHEBI:29035"/>
    </ligand>
</feature>
<feature type="binding site" evidence="1">
    <location>
        <position position="245"/>
    </location>
    <ligand>
        <name>Mn(2+)</name>
        <dbReference type="ChEBI" id="CHEBI:29035"/>
    </ligand>
</feature>
<comment type="function">
    <text evidence="1">Catalyzes the condensation of the acetyl group of acetyl-CoA with 3-methyl-2-oxobutanoate (2-ketoisovalerate) to form 3-carboxy-3-hydroxy-4-methylpentanoate (2-isopropylmalate).</text>
</comment>
<comment type="catalytic activity">
    <reaction evidence="1">
        <text>3-methyl-2-oxobutanoate + acetyl-CoA + H2O = (2S)-2-isopropylmalate + CoA + H(+)</text>
        <dbReference type="Rhea" id="RHEA:21524"/>
        <dbReference type="ChEBI" id="CHEBI:1178"/>
        <dbReference type="ChEBI" id="CHEBI:11851"/>
        <dbReference type="ChEBI" id="CHEBI:15377"/>
        <dbReference type="ChEBI" id="CHEBI:15378"/>
        <dbReference type="ChEBI" id="CHEBI:57287"/>
        <dbReference type="ChEBI" id="CHEBI:57288"/>
        <dbReference type="EC" id="2.3.3.13"/>
    </reaction>
</comment>
<comment type="cofactor">
    <cofactor evidence="1">
        <name>Mn(2+)</name>
        <dbReference type="ChEBI" id="CHEBI:29035"/>
    </cofactor>
</comment>
<comment type="pathway">
    <text evidence="1">Amino-acid biosynthesis; L-leucine biosynthesis; L-leucine from 3-methyl-2-oxobutanoate: step 1/4.</text>
</comment>
<comment type="subunit">
    <text evidence="1">Homodimer.</text>
</comment>
<comment type="subcellular location">
    <subcellularLocation>
        <location evidence="1">Cytoplasm</location>
    </subcellularLocation>
</comment>
<comment type="similarity">
    <text evidence="1">Belongs to the alpha-IPM synthase/homocitrate synthase family. LeuA type 1 subfamily.</text>
</comment>
<proteinExistence type="inferred from homology"/>
<name>LEU1_RHOPS</name>
<protein>
    <recommendedName>
        <fullName evidence="1">2-isopropylmalate synthase</fullName>
        <ecNumber evidence="1">2.3.3.13</ecNumber>
    </recommendedName>
    <alternativeName>
        <fullName evidence="1">Alpha-IPM synthase</fullName>
    </alternativeName>
    <alternativeName>
        <fullName evidence="1">Alpha-isopropylmalate synthase</fullName>
    </alternativeName>
</protein>